<sequence>MGNGTWEGCHVDSRVDHLFPPSLYIFVIGVGLPTNCLALWAAYRQVRQRNELGVYLMNLSIADLLYICTLPLWVDYFLHHDNWIHGPGSCKLFGFIFYTNIYISIAFLCCISVDRYLAVAHPLRFARLRRVKTAVAVSSVVWATELGANSVPLFHDELFRDRYNHTFCFEKFPMEGWVAWMNLYRVFVGFLFPWALMLLSYRGILRAVRGSVSTERQEKAKIKRLALSLIAIVLVCFAPYHVLLLSRSAVYLGHPWDCGFEERVFSAYHSSLAFTSLNCVADPILYCLVNEGARSDVAKALHNLLRFLTSDKPQEMASASLTLDTPLTSKRNSMARAVAAGWVASPPSQGDQVQLKMLPPPAP</sequence>
<gene>
    <name type="primary">GPR4</name>
</gene>
<proteinExistence type="inferred from homology"/>
<organism>
    <name type="scientific">Sus scrofa</name>
    <name type="common">Pig</name>
    <dbReference type="NCBI Taxonomy" id="9823"/>
    <lineage>
        <taxon>Eukaryota</taxon>
        <taxon>Metazoa</taxon>
        <taxon>Chordata</taxon>
        <taxon>Craniata</taxon>
        <taxon>Vertebrata</taxon>
        <taxon>Euteleostomi</taxon>
        <taxon>Mammalia</taxon>
        <taxon>Eutheria</taxon>
        <taxon>Laurasiatheria</taxon>
        <taxon>Artiodactyla</taxon>
        <taxon>Suina</taxon>
        <taxon>Suidae</taxon>
        <taxon>Sus</taxon>
    </lineage>
</organism>
<protein>
    <recommendedName>
        <fullName evidence="6">G-protein coupled receptor 4</fullName>
    </recommendedName>
</protein>
<accession>P50132</accession>
<accession>A0A287AXR9</accession>
<reference key="1">
    <citation type="journal article" date="1995" name="Genomics">
        <title>Isolation of a novel G protein-coupled receptor (GPR4) localized to chromosome 19q13.3.</title>
        <authorList>
            <person name="Mahadevan M.S."/>
            <person name="Baird S."/>
            <person name="Bailly J.E."/>
            <person name="Shutler G.G."/>
            <person name="Sabourin L.A."/>
            <person name="Tsilfidis C."/>
            <person name="Neville C.E."/>
            <person name="Narang M."/>
            <person name="Korneluk R.G."/>
        </authorList>
    </citation>
    <scope>NUCLEOTIDE SEQUENCE [GENOMIC DNA]</scope>
</reference>
<reference key="2">
    <citation type="submission" date="2009-11" db="EMBL/GenBank/DDBJ databases">
        <authorList>
            <consortium name="Porcine genome sequencing project"/>
        </authorList>
    </citation>
    <scope>NUCLEOTIDE SEQUENCE [LARGE SCALE GENOMIC DNA]</scope>
    <source>
        <strain>Duroc</strain>
    </source>
</reference>
<name>GPR4_PIG</name>
<comment type="function">
    <text evidence="1 2">Proton-sensing G-protein coupled receptor activated by extracellular pH, which is required to monitor pH changes and generate adaptive reactions. Activated by an optimal pH of 6.8-7.2. Ligand binding causes a conformation change that triggers signaling via guanine nucleotide-binding proteins (G proteins) and modulates the activity of downstream effectors, such as adenylate cyclase. GPR4 is mainly coupled to G(s) G proteins and mediates activation of adenylate cyclase activity. May also couple with G(q) and G(12)/G(13) G proteins (By similarity). Acts as a key regulator of respiratory sensitivity to CO2/H(+) in brain retrotrapezoid nucleus neurons: acts by mediating detection of protons generated by the formation of carbonic acid in the blood, an important mechanism to impulse to breathe (By similarity). Also acts as a regulator of acid secretion in the kidney collecting duct by maintaining acid-base homeostasis in the kidney. Acidosis-induced GPR4 activation increases paracellular gap formation and permeability of vascular endothelial cells, possibly through the G(12)/G(13)/Rho GTPase signaling pathway (By similarity).</text>
</comment>
<comment type="activity regulation">
    <text evidence="1">Activated by a network of residues that connects an extracellular-facing cavity to Glu-145, a conserved charged residue buried in the transmembrane core of the receptor. Protonation likely drives conformational changes in extracellular loop 2 (ECL2), which stabilizes movement of transmembrane 3 (TM3) and a series of rearrangements that connect the extracellular-facing cavity to Glu-145, a residue only conserved in proton-sensing G-protein coupled receptors.</text>
</comment>
<comment type="subcellular location">
    <subcellularLocation>
        <location evidence="1">Cell membrane</location>
        <topology evidence="3">Multi-pass membrane protein</topology>
    </subcellularLocation>
</comment>
<comment type="domain">
    <text evidence="1">A multitude of proton-sensing residues, which include extracellular histidine residues (His-155, His-165 and His-269) or triad of buried acidic residues (Asp-63, Glu-145 and Asp-282), contribute to activation of the G-protein coupled receptor activity and pH sensitivity.</text>
</comment>
<comment type="similarity">
    <text evidence="4">Belongs to the G-protein coupled receptor 1 family.</text>
</comment>
<evidence type="ECO:0000250" key="1">
    <source>
        <dbReference type="UniProtKB" id="P46093"/>
    </source>
</evidence>
<evidence type="ECO:0000250" key="2">
    <source>
        <dbReference type="UniProtKB" id="Q8BUD0"/>
    </source>
</evidence>
<evidence type="ECO:0000255" key="3"/>
<evidence type="ECO:0000255" key="4">
    <source>
        <dbReference type="PROSITE-ProRule" id="PRU00521"/>
    </source>
</evidence>
<evidence type="ECO:0000256" key="5">
    <source>
        <dbReference type="SAM" id="MobiDB-lite"/>
    </source>
</evidence>
<evidence type="ECO:0000305" key="6"/>
<dbReference type="EMBL" id="U22108">
    <property type="protein sequence ID" value="AAA98458.1"/>
    <property type="molecule type" value="Genomic_DNA"/>
</dbReference>
<dbReference type="EMBL" id="AEMK02000041">
    <property type="status" value="NOT_ANNOTATED_CDS"/>
    <property type="molecule type" value="Genomic_DNA"/>
</dbReference>
<dbReference type="PIR" id="B57641">
    <property type="entry name" value="B57641"/>
</dbReference>
<dbReference type="RefSeq" id="NP_001116590.1">
    <property type="nucleotide sequence ID" value="NM_001123118.1"/>
</dbReference>
<dbReference type="RefSeq" id="XP_020948876.1">
    <property type="nucleotide sequence ID" value="XM_021093217.1"/>
</dbReference>
<dbReference type="RefSeq" id="XP_020948877.1">
    <property type="nucleotide sequence ID" value="XM_021093218.1"/>
</dbReference>
<dbReference type="SMR" id="P50132"/>
<dbReference type="FunCoup" id="P50132">
    <property type="interactions" value="157"/>
</dbReference>
<dbReference type="STRING" id="9823.ENSSSCP00000048942"/>
<dbReference type="GlyCosmos" id="P50132">
    <property type="glycosylation" value="2 sites, No reported glycans"/>
</dbReference>
<dbReference type="GlyGen" id="P50132">
    <property type="glycosylation" value="2 sites"/>
</dbReference>
<dbReference type="PaxDb" id="9823-ENSSSCP00000027843"/>
<dbReference type="Ensembl" id="ENSSSCT00000048531.3">
    <property type="protein sequence ID" value="ENSSSCP00000048942.1"/>
    <property type="gene ID" value="ENSSSCG00000037184.3"/>
</dbReference>
<dbReference type="Ensembl" id="ENSSSCT00000098754.1">
    <property type="protein sequence ID" value="ENSSSCP00000078799.1"/>
    <property type="gene ID" value="ENSSSCG00000037184.3"/>
</dbReference>
<dbReference type="Ensembl" id="ENSSSCT00015013399.1">
    <property type="protein sequence ID" value="ENSSSCP00015005178.1"/>
    <property type="gene ID" value="ENSSSCG00015010239.1"/>
</dbReference>
<dbReference type="Ensembl" id="ENSSSCT00025068871.1">
    <property type="protein sequence ID" value="ENSSSCP00025029654.1"/>
    <property type="gene ID" value="ENSSSCG00025050472.1"/>
</dbReference>
<dbReference type="Ensembl" id="ENSSSCT00030079836.1">
    <property type="protein sequence ID" value="ENSSSCP00030036556.1"/>
    <property type="gene ID" value="ENSSSCG00030057267.1"/>
</dbReference>
<dbReference type="Ensembl" id="ENSSSCT00035088253.1">
    <property type="protein sequence ID" value="ENSSSCP00035036871.1"/>
    <property type="gene ID" value="ENSSSCG00035065529.1"/>
</dbReference>
<dbReference type="Ensembl" id="ENSSSCT00040094910.1">
    <property type="protein sequence ID" value="ENSSSCP00040041994.1"/>
    <property type="gene ID" value="ENSSSCG00040069335.1"/>
</dbReference>
<dbReference type="Ensembl" id="ENSSSCT00045017735.1">
    <property type="protein sequence ID" value="ENSSSCP00045012208.1"/>
    <property type="gene ID" value="ENSSSCG00045010480.1"/>
</dbReference>
<dbReference type="Ensembl" id="ENSSSCT00055018646.1">
    <property type="protein sequence ID" value="ENSSSCP00055014687.1"/>
    <property type="gene ID" value="ENSSSCG00055009564.1"/>
</dbReference>
<dbReference type="Ensembl" id="ENSSSCT00060026499.1">
    <property type="protein sequence ID" value="ENSSSCP00060011277.1"/>
    <property type="gene ID" value="ENSSSCG00060019629.1"/>
</dbReference>
<dbReference type="Ensembl" id="ENSSSCT00065004228.1">
    <property type="protein sequence ID" value="ENSSSCP00065001719.1"/>
    <property type="gene ID" value="ENSSSCG00065003170.1"/>
</dbReference>
<dbReference type="Ensembl" id="ENSSSCT00105077776">
    <property type="protein sequence ID" value="ENSSSCP00105055094"/>
    <property type="gene ID" value="ENSSSCG00105040776"/>
</dbReference>
<dbReference type="Ensembl" id="ENSSSCT00110065217">
    <property type="protein sequence ID" value="ENSSSCP00110045852"/>
    <property type="gene ID" value="ENSSSCG00110034255"/>
</dbReference>
<dbReference type="GeneID" id="100144489"/>
<dbReference type="KEGG" id="ssc:100144489"/>
<dbReference type="CTD" id="2828"/>
<dbReference type="VGNC" id="VGNC:88631">
    <property type="gene designation" value="GPR4"/>
</dbReference>
<dbReference type="eggNOG" id="ENOG502QS9G">
    <property type="taxonomic scope" value="Eukaryota"/>
</dbReference>
<dbReference type="GeneTree" id="ENSGT01130000278337"/>
<dbReference type="InParanoid" id="P50132"/>
<dbReference type="OMA" id="RTWEGCH"/>
<dbReference type="OrthoDB" id="8742459at2759"/>
<dbReference type="Proteomes" id="UP000008227">
    <property type="component" value="Chromosome 6"/>
</dbReference>
<dbReference type="Proteomes" id="UP000314985">
    <property type="component" value="Unplaced"/>
</dbReference>
<dbReference type="Proteomes" id="UP000694570">
    <property type="component" value="Unplaced"/>
</dbReference>
<dbReference type="Proteomes" id="UP000694571">
    <property type="component" value="Unplaced"/>
</dbReference>
<dbReference type="Proteomes" id="UP000694720">
    <property type="component" value="Unplaced"/>
</dbReference>
<dbReference type="Proteomes" id="UP000694722">
    <property type="component" value="Unplaced"/>
</dbReference>
<dbReference type="Proteomes" id="UP000694723">
    <property type="component" value="Unplaced"/>
</dbReference>
<dbReference type="Proteomes" id="UP000694724">
    <property type="component" value="Unplaced"/>
</dbReference>
<dbReference type="Proteomes" id="UP000694725">
    <property type="component" value="Unplaced"/>
</dbReference>
<dbReference type="Proteomes" id="UP000694726">
    <property type="component" value="Unplaced"/>
</dbReference>
<dbReference type="Proteomes" id="UP000694727">
    <property type="component" value="Unplaced"/>
</dbReference>
<dbReference type="Proteomes" id="UP000694728">
    <property type="component" value="Unplaced"/>
</dbReference>
<dbReference type="Bgee" id="ENSSSCG00000037184">
    <property type="expression patterns" value="Expressed in oocyte and 24 other cell types or tissues"/>
</dbReference>
<dbReference type="GO" id="GO:0005886">
    <property type="term" value="C:plasma membrane"/>
    <property type="evidence" value="ECO:0000250"/>
    <property type="project" value="UniProtKB"/>
</dbReference>
<dbReference type="GO" id="GO:0004930">
    <property type="term" value="F:G protein-coupled receptor activity"/>
    <property type="evidence" value="ECO:0000250"/>
    <property type="project" value="UniProtKB"/>
</dbReference>
<dbReference type="GO" id="GO:0007189">
    <property type="term" value="P:adenylate cyclase-activating G protein-coupled receptor signaling pathway"/>
    <property type="evidence" value="ECO:0000250"/>
    <property type="project" value="UniProtKB"/>
</dbReference>
<dbReference type="GO" id="GO:0060055">
    <property type="term" value="P:angiogenesis involved in wound healing"/>
    <property type="evidence" value="ECO:0007669"/>
    <property type="project" value="Ensembl"/>
</dbReference>
<dbReference type="GO" id="GO:0072144">
    <property type="term" value="P:glomerular mesangial cell development"/>
    <property type="evidence" value="ECO:0007669"/>
    <property type="project" value="Ensembl"/>
</dbReference>
<dbReference type="GO" id="GO:0016525">
    <property type="term" value="P:negative regulation of angiogenesis"/>
    <property type="evidence" value="ECO:0007669"/>
    <property type="project" value="Ensembl"/>
</dbReference>
<dbReference type="GO" id="GO:0007200">
    <property type="term" value="P:phospholipase C-activating G protein-coupled receptor signaling pathway"/>
    <property type="evidence" value="ECO:0007669"/>
    <property type="project" value="Ensembl"/>
</dbReference>
<dbReference type="GO" id="GO:0050729">
    <property type="term" value="P:positive regulation of inflammatory response"/>
    <property type="evidence" value="ECO:0000250"/>
    <property type="project" value="UniProtKB"/>
</dbReference>
<dbReference type="GO" id="GO:0035025">
    <property type="term" value="P:positive regulation of Rho protein signal transduction"/>
    <property type="evidence" value="ECO:0007669"/>
    <property type="project" value="Ensembl"/>
</dbReference>
<dbReference type="GO" id="GO:0030155">
    <property type="term" value="P:regulation of cell adhesion"/>
    <property type="evidence" value="ECO:0000250"/>
    <property type="project" value="UniProtKB"/>
</dbReference>
<dbReference type="GO" id="GO:0043114">
    <property type="term" value="P:regulation of vascular permeability"/>
    <property type="evidence" value="ECO:0000250"/>
    <property type="project" value="UniProtKB"/>
</dbReference>
<dbReference type="GO" id="GO:0010447">
    <property type="term" value="P:response to acidic pH"/>
    <property type="evidence" value="ECO:0000250"/>
    <property type="project" value="UniProtKB"/>
</dbReference>
<dbReference type="CDD" id="cd15366">
    <property type="entry name" value="7tmA_GPR4"/>
    <property type="match status" value="1"/>
</dbReference>
<dbReference type="FunFam" id="1.20.1070.10:FF:000065">
    <property type="entry name" value="G-protein coupled receptor 4"/>
    <property type="match status" value="1"/>
</dbReference>
<dbReference type="Gene3D" id="1.20.1070.10">
    <property type="entry name" value="Rhodopsin 7-helix transmembrane proteins"/>
    <property type="match status" value="1"/>
</dbReference>
<dbReference type="InterPro" id="IPR000276">
    <property type="entry name" value="GPCR_Rhodpsn"/>
</dbReference>
<dbReference type="InterPro" id="IPR017452">
    <property type="entry name" value="GPCR_Rhodpsn_7TM"/>
</dbReference>
<dbReference type="InterPro" id="IPR002276">
    <property type="entry name" value="GPR4_orph"/>
</dbReference>
<dbReference type="PANTHER" id="PTHR24234:SF10">
    <property type="entry name" value="G-PROTEIN COUPLED RECEPTOR 4"/>
    <property type="match status" value="1"/>
</dbReference>
<dbReference type="PANTHER" id="PTHR24234">
    <property type="entry name" value="LYSOPHOSPHATIDIC ACID RECEPTOR 5/SPHINGOSYLPHOSPHORYLCHOLINE RECEPTOR"/>
    <property type="match status" value="1"/>
</dbReference>
<dbReference type="Pfam" id="PF00001">
    <property type="entry name" value="7tm_1"/>
    <property type="match status" value="1"/>
</dbReference>
<dbReference type="PRINTS" id="PR00237">
    <property type="entry name" value="GPCRRHODOPSN"/>
</dbReference>
<dbReference type="PRINTS" id="PR01147">
    <property type="entry name" value="GPR4RECEPTOR"/>
</dbReference>
<dbReference type="SUPFAM" id="SSF81321">
    <property type="entry name" value="Family A G protein-coupled receptor-like"/>
    <property type="match status" value="1"/>
</dbReference>
<dbReference type="PROSITE" id="PS00237">
    <property type="entry name" value="G_PROTEIN_RECEP_F1_1"/>
    <property type="match status" value="1"/>
</dbReference>
<dbReference type="PROSITE" id="PS50262">
    <property type="entry name" value="G_PROTEIN_RECEP_F1_2"/>
    <property type="match status" value="1"/>
</dbReference>
<keyword id="KW-1003">Cell membrane</keyword>
<keyword id="KW-1015">Disulfide bond</keyword>
<keyword id="KW-0297">G-protein coupled receptor</keyword>
<keyword id="KW-0325">Glycoprotein</keyword>
<keyword id="KW-0472">Membrane</keyword>
<keyword id="KW-0675">Receptor</keyword>
<keyword id="KW-1185">Reference proteome</keyword>
<keyword id="KW-0807">Transducer</keyword>
<keyword id="KW-0812">Transmembrane</keyword>
<keyword id="KW-1133">Transmembrane helix</keyword>
<feature type="chain" id="PRO_0000069513" description="G-protein coupled receptor 4">
    <location>
        <begin position="1"/>
        <end position="363"/>
    </location>
</feature>
<feature type="topological domain" description="Extracellular" evidence="1">
    <location>
        <begin position="1"/>
        <end position="8"/>
    </location>
</feature>
<feature type="transmembrane region" description="Helical; Name=1" evidence="1">
    <location>
        <begin position="9"/>
        <end position="45"/>
    </location>
</feature>
<feature type="topological domain" description="Cytoplasmic" evidence="1">
    <location>
        <begin position="46"/>
        <end position="49"/>
    </location>
</feature>
<feature type="transmembrane region" description="Helical; Name=2" evidence="1">
    <location>
        <begin position="50"/>
        <end position="80"/>
    </location>
</feature>
<feature type="topological domain" description="Extracellular" evidence="1">
    <location>
        <begin position="81"/>
        <end position="85"/>
    </location>
</feature>
<feature type="transmembrane region" description="Helical; Name=3" evidence="1">
    <location>
        <begin position="86"/>
        <end position="121"/>
    </location>
</feature>
<feature type="topological domain" description="Cytoplasmic" evidence="1">
    <location>
        <begin position="122"/>
        <end position="129"/>
    </location>
</feature>
<feature type="transmembrane region" description="Helical; Name=4" evidence="1">
    <location>
        <begin position="130"/>
        <end position="156"/>
    </location>
</feature>
<feature type="topological domain" description="Extracellular" evidence="1">
    <location>
        <begin position="157"/>
        <end position="172"/>
    </location>
</feature>
<feature type="transmembrane region" description="Helical; Name=5" evidence="1">
    <location>
        <begin position="173"/>
        <end position="210"/>
    </location>
</feature>
<feature type="topological domain" description="Cytoplasmic" evidence="1">
    <location>
        <begin position="211"/>
        <end position="214"/>
    </location>
</feature>
<feature type="transmembrane region" description="Helical; Name=6" evidence="1">
    <location>
        <begin position="215"/>
        <end position="250"/>
    </location>
</feature>
<feature type="topological domain" description="Extracellular" evidence="1">
    <location>
        <begin position="251"/>
        <end position="260"/>
    </location>
</feature>
<feature type="transmembrane region" description="Helical; Name=7" evidence="1">
    <location>
        <begin position="261"/>
        <end position="289"/>
    </location>
</feature>
<feature type="topological domain" description="Cytoplasmic" evidence="1">
    <location>
        <begin position="290"/>
        <end position="363"/>
    </location>
</feature>
<feature type="region of interest" description="Extracellular loop 2 (ECL2)" evidence="1">
    <location>
        <begin position="157"/>
        <end position="172"/>
    </location>
</feature>
<feature type="region of interest" description="Disordered" evidence="5">
    <location>
        <begin position="344"/>
        <end position="363"/>
    </location>
</feature>
<feature type="site" description="Required for activation" evidence="1">
    <location>
        <position position="145"/>
    </location>
</feature>
<feature type="site" description="Proton sensing" evidence="1">
    <location>
        <position position="155"/>
    </location>
</feature>
<feature type="site" description="Proton sensing" evidence="1">
    <location>
        <position position="165"/>
    </location>
</feature>
<feature type="site" description="Proton sensing" evidence="1">
    <location>
        <position position="269"/>
    </location>
</feature>
<feature type="glycosylation site" description="N-linked (GlcNAc...) asparagine" evidence="3">
    <location>
        <position position="3"/>
    </location>
</feature>
<feature type="glycosylation site" description="N-linked (GlcNAc...) asparagine" evidence="3">
    <location>
        <position position="164"/>
    </location>
</feature>
<feature type="disulfide bond" evidence="1">
    <location>
        <begin position="9"/>
        <end position="258"/>
    </location>
</feature>
<feature type="disulfide bond" evidence="4">
    <location>
        <begin position="90"/>
        <end position="168"/>
    </location>
</feature>
<feature type="sequence conflict" description="In Ref. 1; AAA98458." evidence="6" ref="1">
    <original>A</original>
    <variation>R</variation>
    <location>
        <position position="38"/>
    </location>
</feature>
<feature type="sequence conflict" description="In Ref. 1; AAA98458." evidence="6" ref="1">
    <original>GWVASPPSQG</original>
    <variation>AGWHLRPPR</variation>
    <location>
        <begin position="341"/>
        <end position="350"/>
    </location>
</feature>